<dbReference type="EC" id="3.6.4.12"/>
<dbReference type="EMBL" id="CR942676">
    <property type="protein sequence ID" value="CAJ82887.1"/>
    <property type="molecule type" value="mRNA"/>
</dbReference>
<dbReference type="RefSeq" id="NP_001039231.1">
    <property type="nucleotide sequence ID" value="NM_001045766.1"/>
</dbReference>
<dbReference type="SMR" id="Q28BS0"/>
<dbReference type="FunCoup" id="Q28BS0">
    <property type="interactions" value="2052"/>
</dbReference>
<dbReference type="STRING" id="8364.ENSXETP00000020877"/>
<dbReference type="PaxDb" id="8364-ENSXETP00000046917"/>
<dbReference type="GeneID" id="734092"/>
<dbReference type="KEGG" id="xtr:734092"/>
<dbReference type="AGR" id="Xenbase:XB-GENE-971646"/>
<dbReference type="CTD" id="4172"/>
<dbReference type="Xenbase" id="XB-GENE-971646">
    <property type="gene designation" value="zmcm3"/>
</dbReference>
<dbReference type="eggNOG" id="KOG0479">
    <property type="taxonomic scope" value="Eukaryota"/>
</dbReference>
<dbReference type="HOGENOM" id="CLU_000995_6_0_1"/>
<dbReference type="InParanoid" id="Q28BS0"/>
<dbReference type="OMA" id="EANHIMV"/>
<dbReference type="OrthoDB" id="1882346at2759"/>
<dbReference type="PhylomeDB" id="Q28BS0"/>
<dbReference type="Reactome" id="R-XTR-68867">
    <property type="pathway name" value="Assembly of the pre-replicative complex"/>
</dbReference>
<dbReference type="Reactome" id="R-XTR-68949">
    <property type="pathway name" value="Orc1 removal from chromatin"/>
</dbReference>
<dbReference type="Reactome" id="R-XTR-68962">
    <property type="pathway name" value="Activation of the pre-replicative complex"/>
</dbReference>
<dbReference type="Reactome" id="R-XTR-69052">
    <property type="pathway name" value="Switching of origins to a post-replicative state"/>
</dbReference>
<dbReference type="Proteomes" id="UP000008143">
    <property type="component" value="Chromosome 5"/>
</dbReference>
<dbReference type="Bgee" id="ENSXETG00000021701">
    <property type="expression patterns" value="Expressed in neurula embryo and 18 other cell types or tissues"/>
</dbReference>
<dbReference type="GO" id="GO:0071162">
    <property type="term" value="C:CMG complex"/>
    <property type="evidence" value="ECO:0000250"/>
    <property type="project" value="UniProtKB"/>
</dbReference>
<dbReference type="GO" id="GO:0042555">
    <property type="term" value="C:MCM complex"/>
    <property type="evidence" value="ECO:0000250"/>
    <property type="project" value="UniProtKB"/>
</dbReference>
<dbReference type="GO" id="GO:0005524">
    <property type="term" value="F:ATP binding"/>
    <property type="evidence" value="ECO:0007669"/>
    <property type="project" value="UniProtKB-KW"/>
</dbReference>
<dbReference type="GO" id="GO:0016887">
    <property type="term" value="F:ATP hydrolysis activity"/>
    <property type="evidence" value="ECO:0007669"/>
    <property type="project" value="InterPro"/>
</dbReference>
<dbReference type="GO" id="GO:0003677">
    <property type="term" value="F:DNA binding"/>
    <property type="evidence" value="ECO:0007669"/>
    <property type="project" value="UniProtKB-KW"/>
</dbReference>
<dbReference type="GO" id="GO:0004386">
    <property type="term" value="F:helicase activity"/>
    <property type="evidence" value="ECO:0007669"/>
    <property type="project" value="UniProtKB-KW"/>
</dbReference>
<dbReference type="GO" id="GO:0006270">
    <property type="term" value="P:DNA replication initiation"/>
    <property type="evidence" value="ECO:0007669"/>
    <property type="project" value="InterPro"/>
</dbReference>
<dbReference type="GO" id="GO:0030174">
    <property type="term" value="P:regulation of DNA-templated DNA replication initiation"/>
    <property type="evidence" value="ECO:0007669"/>
    <property type="project" value="UniProtKB-ARBA"/>
</dbReference>
<dbReference type="CDD" id="cd17754">
    <property type="entry name" value="MCM3"/>
    <property type="match status" value="1"/>
</dbReference>
<dbReference type="FunFam" id="2.20.28.10:FF:000006">
    <property type="entry name" value="DNA helicase"/>
    <property type="match status" value="1"/>
</dbReference>
<dbReference type="FunFam" id="3.30.1640.10:FF:000002">
    <property type="entry name" value="DNA helicase"/>
    <property type="match status" value="1"/>
</dbReference>
<dbReference type="Gene3D" id="2.20.28.10">
    <property type="match status" value="1"/>
</dbReference>
<dbReference type="Gene3D" id="3.30.1640.10">
    <property type="entry name" value="mini-chromosome maintenance (MCM) complex, chain A, domain 1"/>
    <property type="match status" value="1"/>
</dbReference>
<dbReference type="Gene3D" id="2.40.50.140">
    <property type="entry name" value="Nucleic acid-binding proteins"/>
    <property type="match status" value="1"/>
</dbReference>
<dbReference type="Gene3D" id="3.40.50.300">
    <property type="entry name" value="P-loop containing nucleotide triphosphate hydrolases"/>
    <property type="match status" value="1"/>
</dbReference>
<dbReference type="InterPro" id="IPR003593">
    <property type="entry name" value="AAA+_ATPase"/>
</dbReference>
<dbReference type="InterPro" id="IPR031327">
    <property type="entry name" value="MCM"/>
</dbReference>
<dbReference type="InterPro" id="IPR008046">
    <property type="entry name" value="Mcm3"/>
</dbReference>
<dbReference type="InterPro" id="IPR018525">
    <property type="entry name" value="MCM_CS"/>
</dbReference>
<dbReference type="InterPro" id="IPR001208">
    <property type="entry name" value="MCM_dom"/>
</dbReference>
<dbReference type="InterPro" id="IPR041562">
    <property type="entry name" value="MCM_lid"/>
</dbReference>
<dbReference type="InterPro" id="IPR027925">
    <property type="entry name" value="MCM_N"/>
</dbReference>
<dbReference type="InterPro" id="IPR033762">
    <property type="entry name" value="MCM_OB"/>
</dbReference>
<dbReference type="InterPro" id="IPR012340">
    <property type="entry name" value="NA-bd_OB-fold"/>
</dbReference>
<dbReference type="InterPro" id="IPR027417">
    <property type="entry name" value="P-loop_NTPase"/>
</dbReference>
<dbReference type="InterPro" id="IPR056575">
    <property type="entry name" value="WH_MCM3_C"/>
</dbReference>
<dbReference type="PANTHER" id="PTHR11630">
    <property type="entry name" value="DNA REPLICATION LICENSING FACTOR MCM FAMILY MEMBER"/>
    <property type="match status" value="1"/>
</dbReference>
<dbReference type="PANTHER" id="PTHR11630:SF106">
    <property type="entry name" value="DNA REPLICATION LICENSING FACTOR MCM3"/>
    <property type="match status" value="1"/>
</dbReference>
<dbReference type="Pfam" id="PF00493">
    <property type="entry name" value="MCM"/>
    <property type="match status" value="1"/>
</dbReference>
<dbReference type="Pfam" id="PF17855">
    <property type="entry name" value="MCM_lid"/>
    <property type="match status" value="1"/>
</dbReference>
<dbReference type="Pfam" id="PF14551">
    <property type="entry name" value="MCM_N"/>
    <property type="match status" value="1"/>
</dbReference>
<dbReference type="Pfam" id="PF17207">
    <property type="entry name" value="MCM_OB"/>
    <property type="match status" value="1"/>
</dbReference>
<dbReference type="Pfam" id="PF23191">
    <property type="entry name" value="WH_MCM3_C"/>
    <property type="match status" value="1"/>
</dbReference>
<dbReference type="PRINTS" id="PR01657">
    <property type="entry name" value="MCMFAMILY"/>
</dbReference>
<dbReference type="PRINTS" id="PR01659">
    <property type="entry name" value="MCMPROTEIN3"/>
</dbReference>
<dbReference type="SMART" id="SM00382">
    <property type="entry name" value="AAA"/>
    <property type="match status" value="1"/>
</dbReference>
<dbReference type="SMART" id="SM00350">
    <property type="entry name" value="MCM"/>
    <property type="match status" value="1"/>
</dbReference>
<dbReference type="SUPFAM" id="SSF50249">
    <property type="entry name" value="Nucleic acid-binding proteins"/>
    <property type="match status" value="1"/>
</dbReference>
<dbReference type="SUPFAM" id="SSF52540">
    <property type="entry name" value="P-loop containing nucleoside triphosphate hydrolases"/>
    <property type="match status" value="1"/>
</dbReference>
<dbReference type="PROSITE" id="PS00847">
    <property type="entry name" value="MCM_1"/>
    <property type="match status" value="1"/>
</dbReference>
<dbReference type="PROSITE" id="PS50051">
    <property type="entry name" value="MCM_2"/>
    <property type="match status" value="1"/>
</dbReference>
<evidence type="ECO:0000250" key="1">
    <source>
        <dbReference type="UniProtKB" id="P49739"/>
    </source>
</evidence>
<evidence type="ECO:0000255" key="2"/>
<evidence type="ECO:0000256" key="3">
    <source>
        <dbReference type="SAM" id="MobiDB-lite"/>
    </source>
</evidence>
<evidence type="ECO:0000312" key="4">
    <source>
        <dbReference type="EMBL" id="CAJ82887.1"/>
    </source>
</evidence>
<organism>
    <name type="scientific">Xenopus tropicalis</name>
    <name type="common">Western clawed frog</name>
    <name type="synonym">Silurana tropicalis</name>
    <dbReference type="NCBI Taxonomy" id="8364"/>
    <lineage>
        <taxon>Eukaryota</taxon>
        <taxon>Metazoa</taxon>
        <taxon>Chordata</taxon>
        <taxon>Craniata</taxon>
        <taxon>Vertebrata</taxon>
        <taxon>Euteleostomi</taxon>
        <taxon>Amphibia</taxon>
        <taxon>Batrachia</taxon>
        <taxon>Anura</taxon>
        <taxon>Pipoidea</taxon>
        <taxon>Pipidae</taxon>
        <taxon>Xenopodinae</taxon>
        <taxon>Xenopus</taxon>
        <taxon>Silurana</taxon>
    </lineage>
</organism>
<sequence length="809" mass="90823">MAAPAVTELEDQEMREAQREYLDFLDDEEDQGIYQSKVRDMISENQYRLIVNVNDLRKKNEKRANMLMNNAFEGLIAFQRALKDFVASIDGTYAKQYEEFYIGLEGSFGNKHVTPRTLTSRCLSCIVCVEGIVTKCSLVRPKVVRSVHYCPATKKTIERKYTDLTSLEAFPSSAVYPTKDEENNPLETEYGLSIYKDHQTITIQEMPEKAPAGQLPRSVDIILDDDLVDKVKPGDRVQVIGTYRCLPSKQNGYTSASFRTILIACNVIQMSKEVTPVFSADDLAKIKKFSKSHSKDIFEQLSRSLAPSIHGHLYIKKAILCMLLGGVEKVLDNGTRIRGDINVLLIGDPSVAKSQLLRYVLCTAPRAIPTTGRGSSGVGLTAAVTTDQETGERRLEAGAMVLADRGVVCIDEFDKMSDMDRTAIHEVMEQGRVTIAKAGIHARLNARCSVLAAANPVYGRYDQYKTPMDNIGLQDSLLSRFDLLFIMLDQMDPEQDREISDHVLRMHRYRAAGEQDGDAMPLGSAVDILATNDPNVTSEEQQELQVYEKHDSLLHGVKKRKEKILSVEFMRKYVHVAKIFKPVLTQEAASFIAEEYSRLRNQDQLSTDVARTSPVTARTLETLIRLSTAHAKVRMSKTVQLQDAEAAIELVQYAYFKKVLEKEKKRRRRDEDSDTEGEQQTQPDGEAKKRRKKRRAQEGESHDPYEFSDTEDETPVVHTPKTPVNGQEEMETDSSAKPGLSGERLKAFKSALLGAFKSAHAQSIAMEALMEAINKRNDSPFSQAEVKAALELMEEANHIMVSDNIVFLI</sequence>
<protein>
    <recommendedName>
        <fullName>Zygotic DNA replication licensing factor mcm3</fullName>
        <ecNumber>3.6.4.12</ecNumber>
    </recommendedName>
    <alternativeName>
        <fullName>Zygotic minichromosome maintenance protein 3</fullName>
        <shortName>zMCM3</shortName>
    </alternativeName>
</protein>
<comment type="function">
    <text evidence="1">Acts as a component of the MCM2-7 complex (MCM complex) which is the putative replicative helicase essential for 'once per cell cycle' DNA replication initiation and elongation in eukaryotic cells. The active ATPase sites in the MCM2-7 ring are formed through the interaction surfaces of two neighboring subunits such that a critical structure of a conserved arginine finger motif is provided in trans relative to the ATP-binding site of the Walker A box of the adjacent subunit. The six ATPase active sites, however, are likely to contribute differentially to the complex helicase activity. The existence of maternal and zygotic forms of mcm3 and mcm6 suggests that specific forms of mcm2-7 complexes may be used during different stages of development (By similarity).</text>
</comment>
<comment type="catalytic activity">
    <reaction>
        <text>ATP + H2O = ADP + phosphate + H(+)</text>
        <dbReference type="Rhea" id="RHEA:13065"/>
        <dbReference type="ChEBI" id="CHEBI:15377"/>
        <dbReference type="ChEBI" id="CHEBI:15378"/>
        <dbReference type="ChEBI" id="CHEBI:30616"/>
        <dbReference type="ChEBI" id="CHEBI:43474"/>
        <dbReference type="ChEBI" id="CHEBI:456216"/>
        <dbReference type="EC" id="3.6.4.12"/>
    </reaction>
</comment>
<comment type="subunit">
    <text evidence="1">Component of the mcm2-7 complex (RLF-M). The complex forms a toroidal hexameric ring with the proposed subunit order mcm2-mcm6-mcm4-mcm7-mcm3-mcm5. Component of the CMG helicase complex, composed of the mcm2-7 complex, the GINS complex and cdc45.</text>
</comment>
<comment type="subcellular location">
    <subcellularLocation>
        <location evidence="1">Nucleus</location>
    </subcellularLocation>
    <subcellularLocation>
        <location evidence="1">Chromosome</location>
    </subcellularLocation>
    <text evidence="1">Associated with chromatin before the formation of nuclei and detaches from it as DNA replication progresses.</text>
</comment>
<comment type="similarity">
    <text evidence="2">Belongs to the MCM family.</text>
</comment>
<feature type="chain" id="PRO_0000240593" description="Zygotic DNA replication licensing factor mcm3">
    <location>
        <begin position="1"/>
        <end position="809"/>
    </location>
</feature>
<feature type="domain" description="MCM" evidence="2">
    <location>
        <begin position="297"/>
        <end position="504"/>
    </location>
</feature>
<feature type="region of interest" description="Disordered" evidence="3">
    <location>
        <begin position="664"/>
        <end position="741"/>
    </location>
</feature>
<feature type="short sequence motif" description="Arginine finger">
    <location>
        <begin position="479"/>
        <end position="482"/>
    </location>
</feature>
<feature type="compositionally biased region" description="Basic and acidic residues" evidence="3">
    <location>
        <begin position="696"/>
        <end position="705"/>
    </location>
</feature>
<feature type="binding site" evidence="2">
    <location>
        <begin position="347"/>
        <end position="354"/>
    </location>
    <ligand>
        <name>ATP</name>
        <dbReference type="ChEBI" id="CHEBI:30616"/>
    </ligand>
</feature>
<name>MCM3Z_XENTR</name>
<proteinExistence type="evidence at transcript level"/>
<gene>
    <name type="primary">zmcm3</name>
    <name type="ORF">TNeu014d13.1</name>
</gene>
<keyword id="KW-0067">ATP-binding</keyword>
<keyword id="KW-0131">Cell cycle</keyword>
<keyword id="KW-0158">Chromosome</keyword>
<keyword id="KW-0235">DNA replication</keyword>
<keyword id="KW-0238">DNA-binding</keyword>
<keyword id="KW-0347">Helicase</keyword>
<keyword id="KW-0378">Hydrolase</keyword>
<keyword id="KW-0547">Nucleotide-binding</keyword>
<keyword id="KW-0539">Nucleus</keyword>
<keyword id="KW-1185">Reference proteome</keyword>
<accession>Q28BS0</accession>
<reference evidence="4" key="1">
    <citation type="submission" date="2006-03" db="EMBL/GenBank/DDBJ databases">
        <authorList>
            <consortium name="Sanger Xenopus tropicalis EST/cDNA project"/>
        </authorList>
    </citation>
    <scope>NUCLEOTIDE SEQUENCE [LARGE SCALE MRNA]</scope>
    <source>
        <tissue>Neurula</tissue>
    </source>
</reference>